<keyword id="KW-0002">3D-structure</keyword>
<keyword id="KW-0158">Chromosome</keyword>
<keyword id="KW-0963">Cytoplasm</keyword>
<keyword id="KW-0238">DNA-binding</keyword>
<keyword id="KW-0539">Nucleus</keyword>
<keyword id="KW-1185">Reference proteome</keyword>
<keyword id="KW-0779">Telomere</keyword>
<reference key="1">
    <citation type="journal article" date="2008" name="Science">
        <title>Fission yeast Pot1-Tpp1 protects telomeres and regulates telomere length.</title>
        <authorList>
            <person name="Miyoshi T."/>
            <person name="Kanoh J."/>
            <person name="Saito M."/>
            <person name="Ishikawa F."/>
        </authorList>
    </citation>
    <scope>NUCLEOTIDE SEQUENCE [MRNA]</scope>
    <scope>FUNCTION</scope>
    <scope>SUBCELLULAR LOCATION</scope>
    <scope>INTERACTION WITH POT1; RAP1 AND TPZ1</scope>
</reference>
<reference key="2">
    <citation type="journal article" date="2002" name="Nature">
        <title>The genome sequence of Schizosaccharomyces pombe.</title>
        <authorList>
            <person name="Wood V."/>
            <person name="Gwilliam R."/>
            <person name="Rajandream M.A."/>
            <person name="Lyne M.H."/>
            <person name="Lyne R."/>
            <person name="Stewart A."/>
            <person name="Sgouros J.G."/>
            <person name="Peat N."/>
            <person name="Hayles J."/>
            <person name="Baker S.G."/>
            <person name="Basham D."/>
            <person name="Bowman S."/>
            <person name="Brooks K."/>
            <person name="Brown D."/>
            <person name="Brown S."/>
            <person name="Chillingworth T."/>
            <person name="Churcher C.M."/>
            <person name="Collins M."/>
            <person name="Connor R."/>
            <person name="Cronin A."/>
            <person name="Davis P."/>
            <person name="Feltwell T."/>
            <person name="Fraser A."/>
            <person name="Gentles S."/>
            <person name="Goble A."/>
            <person name="Hamlin N."/>
            <person name="Harris D.E."/>
            <person name="Hidalgo J."/>
            <person name="Hodgson G."/>
            <person name="Holroyd S."/>
            <person name="Hornsby T."/>
            <person name="Howarth S."/>
            <person name="Huckle E.J."/>
            <person name="Hunt S."/>
            <person name="Jagels K."/>
            <person name="James K.D."/>
            <person name="Jones L."/>
            <person name="Jones M."/>
            <person name="Leather S."/>
            <person name="McDonald S."/>
            <person name="McLean J."/>
            <person name="Mooney P."/>
            <person name="Moule S."/>
            <person name="Mungall K.L."/>
            <person name="Murphy L.D."/>
            <person name="Niblett D."/>
            <person name="Odell C."/>
            <person name="Oliver K."/>
            <person name="O'Neil S."/>
            <person name="Pearson D."/>
            <person name="Quail M.A."/>
            <person name="Rabbinowitsch E."/>
            <person name="Rutherford K.M."/>
            <person name="Rutter S."/>
            <person name="Saunders D."/>
            <person name="Seeger K."/>
            <person name="Sharp S."/>
            <person name="Skelton J."/>
            <person name="Simmonds M.N."/>
            <person name="Squares R."/>
            <person name="Squares S."/>
            <person name="Stevens K."/>
            <person name="Taylor K."/>
            <person name="Taylor R.G."/>
            <person name="Tivey A."/>
            <person name="Walsh S.V."/>
            <person name="Warren T."/>
            <person name="Whitehead S."/>
            <person name="Woodward J.R."/>
            <person name="Volckaert G."/>
            <person name="Aert R."/>
            <person name="Robben J."/>
            <person name="Grymonprez B."/>
            <person name="Weltjens I."/>
            <person name="Vanstreels E."/>
            <person name="Rieger M."/>
            <person name="Schaefer M."/>
            <person name="Mueller-Auer S."/>
            <person name="Gabel C."/>
            <person name="Fuchs M."/>
            <person name="Duesterhoeft A."/>
            <person name="Fritzc C."/>
            <person name="Holzer E."/>
            <person name="Moestl D."/>
            <person name="Hilbert H."/>
            <person name="Borzym K."/>
            <person name="Langer I."/>
            <person name="Beck A."/>
            <person name="Lehrach H."/>
            <person name="Reinhardt R."/>
            <person name="Pohl T.M."/>
            <person name="Eger P."/>
            <person name="Zimmermann W."/>
            <person name="Wedler H."/>
            <person name="Wambutt R."/>
            <person name="Purnelle B."/>
            <person name="Goffeau A."/>
            <person name="Cadieu E."/>
            <person name="Dreano S."/>
            <person name="Gloux S."/>
            <person name="Lelaure V."/>
            <person name="Mottier S."/>
            <person name="Galibert F."/>
            <person name="Aves S.J."/>
            <person name="Xiang Z."/>
            <person name="Hunt C."/>
            <person name="Moore K."/>
            <person name="Hurst S.M."/>
            <person name="Lucas M."/>
            <person name="Rochet M."/>
            <person name="Gaillardin C."/>
            <person name="Tallada V.A."/>
            <person name="Garzon A."/>
            <person name="Thode G."/>
            <person name="Daga R.R."/>
            <person name="Cruzado L."/>
            <person name="Jimenez J."/>
            <person name="Sanchez M."/>
            <person name="del Rey F."/>
            <person name="Benito J."/>
            <person name="Dominguez A."/>
            <person name="Revuelta J.L."/>
            <person name="Moreno S."/>
            <person name="Armstrong J."/>
            <person name="Forsburg S.L."/>
            <person name="Cerutti L."/>
            <person name="Lowe T."/>
            <person name="McCombie W.R."/>
            <person name="Paulsen I."/>
            <person name="Potashkin J."/>
            <person name="Shpakovski G.V."/>
            <person name="Ussery D."/>
            <person name="Barrell B.G."/>
            <person name="Nurse P."/>
        </authorList>
    </citation>
    <scope>NUCLEOTIDE SEQUENCE [LARGE SCALE GENOMIC DNA]</scope>
    <source>
        <strain>972 / ATCC 24843</strain>
    </source>
</reference>
<reference key="3">
    <citation type="journal article" date="2006" name="Nat. Biotechnol.">
        <title>ORFeome cloning and global analysis of protein localization in the fission yeast Schizosaccharomyces pombe.</title>
        <authorList>
            <person name="Matsuyama A."/>
            <person name="Arai R."/>
            <person name="Yashiroda Y."/>
            <person name="Shirai A."/>
            <person name="Kamata A."/>
            <person name="Sekido S."/>
            <person name="Kobayashi Y."/>
            <person name="Hashimoto A."/>
            <person name="Hamamoto M."/>
            <person name="Hiraoka Y."/>
            <person name="Horinouchi S."/>
            <person name="Yoshida M."/>
        </authorList>
    </citation>
    <scope>SUBCELLULAR LOCATION [LARGE SCALE ANALYSIS]</scope>
</reference>
<accession>O13852</accession>
<accession>B3A005</accession>
<sequence>MNEKIRSQSVLNTLETFFIKENHYDMQREESSIVNACLRYLGYSKSMCHEKMPIFMDIAFIEYCFNLSLDPSSFQNLPITQTQPDSQQILWEYSLISNALERLENIELERQNCMREDGLVKYTNELLLNKETLNNEALKLYSCAKAGICRWMAFHFLEQEPIDHINFTKFLQDWGSHNEKEMEALQRLSKHKIRKRLIYVSQHKKKMPWSKFNSVLSRYIQCTKLQLEVFCDYDFKQREIVKMLTSNIN</sequence>
<protein>
    <recommendedName>
        <fullName>Protection of telomeres protein poz1</fullName>
    </recommendedName>
    <alternativeName>
        <fullName>Pot1-associated protein poz1</fullName>
    </alternativeName>
</protein>
<organism>
    <name type="scientific">Schizosaccharomyces pombe (strain 972 / ATCC 24843)</name>
    <name type="common">Fission yeast</name>
    <dbReference type="NCBI Taxonomy" id="284812"/>
    <lineage>
        <taxon>Eukaryota</taxon>
        <taxon>Fungi</taxon>
        <taxon>Dikarya</taxon>
        <taxon>Ascomycota</taxon>
        <taxon>Taphrinomycotina</taxon>
        <taxon>Schizosaccharomycetes</taxon>
        <taxon>Schizosaccharomycetales</taxon>
        <taxon>Schizosaccharomycetaceae</taxon>
        <taxon>Schizosaccharomyces</taxon>
    </lineage>
</organism>
<name>POZ1_SCHPO</name>
<proteinExistence type="evidence at protein level"/>
<dbReference type="EMBL" id="AB433171">
    <property type="protein sequence ID" value="BAG48201.1"/>
    <property type="molecule type" value="mRNA"/>
</dbReference>
<dbReference type="EMBL" id="CU329670">
    <property type="protein sequence ID" value="CAB10124.1"/>
    <property type="molecule type" value="Genomic_DNA"/>
</dbReference>
<dbReference type="PIR" id="T38000">
    <property type="entry name" value="T38000"/>
</dbReference>
<dbReference type="RefSeq" id="NP_594428.1">
    <property type="nucleotide sequence ID" value="NM_001019857.2"/>
</dbReference>
<dbReference type="PDB" id="5WE0">
    <property type="method" value="X-ray"/>
    <property type="resolution" value="2.30 A"/>
    <property type="chains" value="A/D/G/J=2-249"/>
</dbReference>
<dbReference type="PDB" id="5WE1">
    <property type="method" value="X-ray"/>
    <property type="resolution" value="3.20 A"/>
    <property type="chains" value="A/C=30-75, A/C=86-249"/>
</dbReference>
<dbReference type="PDB" id="5WE2">
    <property type="method" value="X-ray"/>
    <property type="resolution" value="2.50 A"/>
    <property type="chains" value="A/C=2-249"/>
</dbReference>
<dbReference type="PDB" id="5XXE">
    <property type="method" value="X-ray"/>
    <property type="resolution" value="2.50 A"/>
    <property type="chains" value="A/B=2-249"/>
</dbReference>
<dbReference type="PDB" id="5XXF">
    <property type="method" value="X-ray"/>
    <property type="resolution" value="3.10 A"/>
    <property type="chains" value="A/B=2-247"/>
</dbReference>
<dbReference type="PDBsum" id="5WE0"/>
<dbReference type="PDBsum" id="5WE1"/>
<dbReference type="PDBsum" id="5WE2"/>
<dbReference type="PDBsum" id="5XXE"/>
<dbReference type="PDBsum" id="5XXF"/>
<dbReference type="SMR" id="O13852"/>
<dbReference type="BioGRID" id="278714">
    <property type="interactions" value="39"/>
</dbReference>
<dbReference type="ComplexPortal" id="CPX-25757">
    <property type="entry name" value="Shelterin complex"/>
</dbReference>
<dbReference type="FunCoup" id="O13852">
    <property type="interactions" value="1"/>
</dbReference>
<dbReference type="IntAct" id="O13852">
    <property type="interactions" value="1"/>
</dbReference>
<dbReference type="STRING" id="284812.O13852"/>
<dbReference type="iPTMnet" id="O13852"/>
<dbReference type="PaxDb" id="4896-SPAC19G12.13c.1"/>
<dbReference type="EnsemblFungi" id="SPAC19G12.13c.1">
    <property type="protein sequence ID" value="SPAC19G12.13c.1:pep"/>
    <property type="gene ID" value="SPAC19G12.13c"/>
</dbReference>
<dbReference type="GeneID" id="2542244"/>
<dbReference type="KEGG" id="spo:2542244"/>
<dbReference type="PomBase" id="SPAC19G12.13c">
    <property type="gene designation" value="poz1"/>
</dbReference>
<dbReference type="VEuPathDB" id="FungiDB:SPAC19G12.13c"/>
<dbReference type="HOGENOM" id="CLU_1185616_0_0_1"/>
<dbReference type="InParanoid" id="O13852"/>
<dbReference type="OMA" id="QACLENL"/>
<dbReference type="PRO" id="PR:O13852"/>
<dbReference type="Proteomes" id="UP000002485">
    <property type="component" value="Chromosome I"/>
</dbReference>
<dbReference type="GO" id="GO:0140445">
    <property type="term" value="C:chromosome, telomeric repeat region"/>
    <property type="evidence" value="ECO:0000314"/>
    <property type="project" value="PomBase"/>
</dbReference>
<dbReference type="GO" id="GO:0005829">
    <property type="term" value="C:cytosol"/>
    <property type="evidence" value="ECO:0007005"/>
    <property type="project" value="PomBase"/>
</dbReference>
<dbReference type="GO" id="GO:0005634">
    <property type="term" value="C:nucleus"/>
    <property type="evidence" value="ECO:0007005"/>
    <property type="project" value="PomBase"/>
</dbReference>
<dbReference type="GO" id="GO:0070187">
    <property type="term" value="C:shelterin complex"/>
    <property type="evidence" value="ECO:0000314"/>
    <property type="project" value="PomBase"/>
</dbReference>
<dbReference type="GO" id="GO:0003677">
    <property type="term" value="F:DNA binding"/>
    <property type="evidence" value="ECO:0007669"/>
    <property type="project" value="UniProtKB-KW"/>
</dbReference>
<dbReference type="GO" id="GO:0016233">
    <property type="term" value="P:telomere capping"/>
    <property type="evidence" value="ECO:0000316"/>
    <property type="project" value="PomBase"/>
</dbReference>
<dbReference type="GO" id="GO:0000723">
    <property type="term" value="P:telomere maintenance"/>
    <property type="evidence" value="ECO:0000315"/>
    <property type="project" value="PomBase"/>
</dbReference>
<dbReference type="GO" id="GO:0010833">
    <property type="term" value="P:telomere maintenance via telomere lengthening"/>
    <property type="evidence" value="ECO:0000315"/>
    <property type="project" value="PomBase"/>
</dbReference>
<dbReference type="GO" id="GO:0032200">
    <property type="term" value="P:telomere organization"/>
    <property type="evidence" value="ECO:0000315"/>
    <property type="project" value="PomBase"/>
</dbReference>
<gene>
    <name type="primary">poz1</name>
    <name type="ORF">SPAC19G12.13c</name>
</gene>
<feature type="chain" id="PRO_0000116741" description="Protection of telomeres protein poz1">
    <location>
        <begin position="1"/>
        <end position="249"/>
    </location>
</feature>
<feature type="helix" evidence="3">
    <location>
        <begin position="2"/>
        <end position="18"/>
    </location>
</feature>
<feature type="helix" evidence="3">
    <location>
        <begin position="28"/>
        <end position="30"/>
    </location>
</feature>
<feature type="helix" evidence="3">
    <location>
        <begin position="31"/>
        <end position="43"/>
    </location>
</feature>
<feature type="helix" evidence="3">
    <location>
        <begin position="45"/>
        <end position="47"/>
    </location>
</feature>
<feature type="helix" evidence="3">
    <location>
        <begin position="54"/>
        <end position="64"/>
    </location>
</feature>
<feature type="turn" evidence="3">
    <location>
        <begin position="65"/>
        <end position="68"/>
    </location>
</feature>
<feature type="helix" evidence="3">
    <location>
        <begin position="93"/>
        <end position="115"/>
    </location>
</feature>
<feature type="turn" evidence="5">
    <location>
        <begin position="123"/>
        <end position="125"/>
    </location>
</feature>
<feature type="helix" evidence="3">
    <location>
        <begin position="130"/>
        <end position="157"/>
    </location>
</feature>
<feature type="strand" evidence="3">
    <location>
        <begin position="159"/>
        <end position="161"/>
    </location>
</feature>
<feature type="helix" evidence="3">
    <location>
        <begin position="164"/>
        <end position="174"/>
    </location>
</feature>
<feature type="helix" evidence="4">
    <location>
        <begin position="176"/>
        <end position="178"/>
    </location>
</feature>
<feature type="helix" evidence="3">
    <location>
        <begin position="179"/>
        <end position="188"/>
    </location>
</feature>
<feature type="helix" evidence="3">
    <location>
        <begin position="193"/>
        <end position="206"/>
    </location>
</feature>
<feature type="helix" evidence="3">
    <location>
        <begin position="209"/>
        <end position="230"/>
    </location>
</feature>
<feature type="helix" evidence="3">
    <location>
        <begin position="238"/>
        <end position="241"/>
    </location>
</feature>
<comment type="function">
    <text evidence="2">Telomeric DNA-binding protein that negatively regulates telomerase and telomere length.</text>
</comment>
<comment type="subunit">
    <text evidence="2">Interacts with pot1, rap1 and tpz1.</text>
</comment>
<comment type="subcellular location">
    <subcellularLocation>
        <location evidence="1">Cytoplasm</location>
    </subcellularLocation>
    <subcellularLocation>
        <location evidence="1 2">Nucleus</location>
    </subcellularLocation>
    <subcellularLocation>
        <location evidence="2">Chromosome</location>
        <location evidence="2">Telomere</location>
    </subcellularLocation>
</comment>
<evidence type="ECO:0000269" key="1">
    <source>
    </source>
</evidence>
<evidence type="ECO:0000269" key="2">
    <source>
    </source>
</evidence>
<evidence type="ECO:0007829" key="3">
    <source>
        <dbReference type="PDB" id="5WE0"/>
    </source>
</evidence>
<evidence type="ECO:0007829" key="4">
    <source>
        <dbReference type="PDB" id="5WE2"/>
    </source>
</evidence>
<evidence type="ECO:0007829" key="5">
    <source>
        <dbReference type="PDB" id="5XXF"/>
    </source>
</evidence>